<dbReference type="EC" id="2.7.11.1" evidence="2"/>
<dbReference type="EC" id="2.7.11.31" evidence="2"/>
<dbReference type="EMBL" id="AY159788">
    <property type="protein sequence ID" value="AAO17789.1"/>
    <property type="molecule type" value="mRNA"/>
</dbReference>
<dbReference type="EMBL" id="U12148">
    <property type="protein sequence ID" value="AAA85034.1"/>
    <property type="molecule type" value="mRNA"/>
</dbReference>
<dbReference type="RefSeq" id="NP_999431.1">
    <property type="nucleotide sequence ID" value="NM_214266.2"/>
</dbReference>
<dbReference type="BMRB" id="Q28948"/>
<dbReference type="SMR" id="Q28948"/>
<dbReference type="FunCoup" id="Q28948">
    <property type="interactions" value="715"/>
</dbReference>
<dbReference type="STRING" id="9823.ENSSSCP00000055569"/>
<dbReference type="iPTMnet" id="Q28948"/>
<dbReference type="PaxDb" id="9823-ENSSSCP00000004154"/>
<dbReference type="PeptideAtlas" id="Q28948"/>
<dbReference type="Ensembl" id="ENSSSCT00000055782.3">
    <property type="protein sequence ID" value="ENSSSCP00000055569.1"/>
    <property type="gene ID" value="ENSSSCG00000036145.3"/>
</dbReference>
<dbReference type="Ensembl" id="ENSSSCT00000092703.1">
    <property type="protein sequence ID" value="ENSSSCP00000079354.1"/>
    <property type="gene ID" value="ENSSSCG00000036145.3"/>
</dbReference>
<dbReference type="Ensembl" id="ENSSSCT00025002517.1">
    <property type="protein sequence ID" value="ENSSSCP00025000866.1"/>
    <property type="gene ID" value="ENSSSCG00025001949.1"/>
</dbReference>
<dbReference type="Ensembl" id="ENSSSCT00030025452.1">
    <property type="protein sequence ID" value="ENSSSCP00030011356.1"/>
    <property type="gene ID" value="ENSSSCG00030018428.1"/>
</dbReference>
<dbReference type="Ensembl" id="ENSSSCT00035066490.1">
    <property type="protein sequence ID" value="ENSSSCP00035026961.1"/>
    <property type="gene ID" value="ENSSSCG00035049899.1"/>
</dbReference>
<dbReference type="Ensembl" id="ENSSSCT00040103801.1">
    <property type="protein sequence ID" value="ENSSSCP00040047156.1"/>
    <property type="gene ID" value="ENSSSCG00040074948.1"/>
</dbReference>
<dbReference type="Ensembl" id="ENSSSCT00045022440.1">
    <property type="protein sequence ID" value="ENSSSCP00045015458.1"/>
    <property type="gene ID" value="ENSSSCG00045013178.1"/>
</dbReference>
<dbReference type="Ensembl" id="ENSSSCT00050090786.1">
    <property type="protein sequence ID" value="ENSSSCP00050039011.1"/>
    <property type="gene ID" value="ENSSSCG00050066634.1"/>
</dbReference>
<dbReference type="Ensembl" id="ENSSSCT00055018344.1">
    <property type="protein sequence ID" value="ENSSSCP00055014432.1"/>
    <property type="gene ID" value="ENSSSCG00055009404.1"/>
</dbReference>
<dbReference type="Ensembl" id="ENSSSCT00060059516.1">
    <property type="protein sequence ID" value="ENSSSCP00060025496.1"/>
    <property type="gene ID" value="ENSSSCG00060043886.1"/>
</dbReference>
<dbReference type="Ensembl" id="ENSSSCT00065073966.1">
    <property type="protein sequence ID" value="ENSSSCP00065032216.1"/>
    <property type="gene ID" value="ENSSSCG00065053967.1"/>
</dbReference>
<dbReference type="Ensembl" id="ENSSSCT00065073973.1">
    <property type="protein sequence ID" value="ENSSSCP00065032221.1"/>
    <property type="gene ID" value="ENSSSCG00065053967.1"/>
</dbReference>
<dbReference type="Ensembl" id="ENSSSCT00070060625.1">
    <property type="protein sequence ID" value="ENSSSCP00070051667.1"/>
    <property type="gene ID" value="ENSSSCG00070030147.1"/>
</dbReference>
<dbReference type="Ensembl" id="ENSSSCT00070060626.1">
    <property type="protein sequence ID" value="ENSSSCP00070051668.1"/>
    <property type="gene ID" value="ENSSSCG00070030147.1"/>
</dbReference>
<dbReference type="Ensembl" id="ENSSSCT00085013626">
    <property type="protein sequence ID" value="ENSSSCP00085009908"/>
    <property type="gene ID" value="ENSSSCG00085007154"/>
</dbReference>
<dbReference type="Ensembl" id="ENSSSCT00085013667">
    <property type="protein sequence ID" value="ENSSSCP00085009933"/>
    <property type="gene ID" value="ENSSSCG00085007154"/>
</dbReference>
<dbReference type="Ensembl" id="ENSSSCT00090050250">
    <property type="protein sequence ID" value="ENSSSCP00090031303"/>
    <property type="gene ID" value="ENSSSCG00090028380"/>
</dbReference>
<dbReference type="Ensembl" id="ENSSSCT00105072385">
    <property type="protein sequence ID" value="ENSSSCP00105051317"/>
    <property type="gene ID" value="ENSSSCG00105037907"/>
</dbReference>
<dbReference type="Ensembl" id="ENSSSCT00105072393">
    <property type="protein sequence ID" value="ENSSSCP00105051325"/>
    <property type="gene ID" value="ENSSSCG00105037907"/>
</dbReference>
<dbReference type="Ensembl" id="ENSSSCT00110011016">
    <property type="protein sequence ID" value="ENSSSCP00110007808"/>
    <property type="gene ID" value="ENSSSCG00110005614"/>
</dbReference>
<dbReference type="Ensembl" id="ENSSSCT00110011023">
    <property type="protein sequence ID" value="ENSSSCP00110007814"/>
    <property type="gene ID" value="ENSSSCG00110005614"/>
</dbReference>
<dbReference type="Ensembl" id="ENSSSCT00115034259">
    <property type="protein sequence ID" value="ENSSSCP00115032533"/>
    <property type="gene ID" value="ENSSSCG00115019349"/>
</dbReference>
<dbReference type="Ensembl" id="ENSSSCT00130033944">
    <property type="protein sequence ID" value="ENSSSCP00130023519"/>
    <property type="gene ID" value="ENSSSCG00130017278"/>
</dbReference>
<dbReference type="GeneID" id="397504"/>
<dbReference type="KEGG" id="ssc:397504"/>
<dbReference type="CTD" id="5563"/>
<dbReference type="VGNC" id="VGNC:91798">
    <property type="gene designation" value="PRKAA2"/>
</dbReference>
<dbReference type="eggNOG" id="KOG0583">
    <property type="taxonomic scope" value="Eukaryota"/>
</dbReference>
<dbReference type="GeneTree" id="ENSGT00940000156945"/>
<dbReference type="InParanoid" id="Q28948"/>
<dbReference type="OMA" id="SKTKWHF"/>
<dbReference type="OrthoDB" id="193931at2759"/>
<dbReference type="BRENDA" id="2.7.11.1">
    <property type="organism ID" value="6170"/>
</dbReference>
<dbReference type="Reactome" id="R-SSC-1632852">
    <property type="pathway name" value="Macroautophagy"/>
</dbReference>
<dbReference type="Reactome" id="R-SSC-163680">
    <property type="pathway name" value="AMPK inhibits chREBP transcriptional activation activity"/>
</dbReference>
<dbReference type="Reactome" id="R-SSC-200425">
    <property type="pathway name" value="Carnitine shuttle"/>
</dbReference>
<dbReference type="Reactome" id="R-SSC-380972">
    <property type="pathway name" value="Energy dependent regulation of mTOR by LKB1-AMPK"/>
</dbReference>
<dbReference type="Reactome" id="R-SSC-5628897">
    <property type="pathway name" value="TP53 Regulates Metabolic Genes"/>
</dbReference>
<dbReference type="Reactome" id="R-SSC-6804756">
    <property type="pathway name" value="Regulation of TP53 Activity through Phosphorylation"/>
</dbReference>
<dbReference type="Reactome" id="R-SSC-9759194">
    <property type="pathway name" value="Nuclear events mediated by NFE2L2"/>
</dbReference>
<dbReference type="Proteomes" id="UP000008227">
    <property type="component" value="Chromosome 6"/>
</dbReference>
<dbReference type="Proteomes" id="UP000314985">
    <property type="component" value="Chromosome 6"/>
</dbReference>
<dbReference type="Proteomes" id="UP000694570">
    <property type="component" value="Unplaced"/>
</dbReference>
<dbReference type="Proteomes" id="UP000694571">
    <property type="component" value="Unplaced"/>
</dbReference>
<dbReference type="Proteomes" id="UP000694720">
    <property type="component" value="Unplaced"/>
</dbReference>
<dbReference type="Proteomes" id="UP000694722">
    <property type="component" value="Unplaced"/>
</dbReference>
<dbReference type="Proteomes" id="UP000694723">
    <property type="component" value="Unplaced"/>
</dbReference>
<dbReference type="Proteomes" id="UP000694724">
    <property type="component" value="Unplaced"/>
</dbReference>
<dbReference type="Proteomes" id="UP000694725">
    <property type="component" value="Unplaced"/>
</dbReference>
<dbReference type="Proteomes" id="UP000694726">
    <property type="component" value="Unplaced"/>
</dbReference>
<dbReference type="Proteomes" id="UP000694727">
    <property type="component" value="Unplaced"/>
</dbReference>
<dbReference type="Proteomes" id="UP000694728">
    <property type="component" value="Unplaced"/>
</dbReference>
<dbReference type="Bgee" id="ENSSSCG00000036145">
    <property type="expression patterns" value="Expressed in skeletal muscle tissue and 43 other cell types or tissues"/>
</dbReference>
<dbReference type="ExpressionAtlas" id="Q28948">
    <property type="expression patterns" value="baseline and differential"/>
</dbReference>
<dbReference type="GO" id="GO:0030424">
    <property type="term" value="C:axon"/>
    <property type="evidence" value="ECO:0007669"/>
    <property type="project" value="Ensembl"/>
</dbReference>
<dbReference type="GO" id="GO:0036064">
    <property type="term" value="C:ciliary basal body"/>
    <property type="evidence" value="ECO:0007669"/>
    <property type="project" value="Ensembl"/>
</dbReference>
<dbReference type="GO" id="GO:0005737">
    <property type="term" value="C:cytoplasm"/>
    <property type="evidence" value="ECO:0000250"/>
    <property type="project" value="UniProtKB"/>
</dbReference>
<dbReference type="GO" id="GO:0010494">
    <property type="term" value="C:cytoplasmic stress granule"/>
    <property type="evidence" value="ECO:0007669"/>
    <property type="project" value="Ensembl"/>
</dbReference>
<dbReference type="GO" id="GO:0005829">
    <property type="term" value="C:cytosol"/>
    <property type="evidence" value="ECO:0007669"/>
    <property type="project" value="Ensembl"/>
</dbReference>
<dbReference type="GO" id="GO:0030425">
    <property type="term" value="C:dendrite"/>
    <property type="evidence" value="ECO:0007669"/>
    <property type="project" value="Ensembl"/>
</dbReference>
<dbReference type="GO" id="GO:0005794">
    <property type="term" value="C:Golgi apparatus"/>
    <property type="evidence" value="ECO:0007669"/>
    <property type="project" value="Ensembl"/>
</dbReference>
<dbReference type="GO" id="GO:0043025">
    <property type="term" value="C:neuronal cell body"/>
    <property type="evidence" value="ECO:0007669"/>
    <property type="project" value="Ensembl"/>
</dbReference>
<dbReference type="GO" id="GO:0016607">
    <property type="term" value="C:nuclear speck"/>
    <property type="evidence" value="ECO:0007669"/>
    <property type="project" value="Ensembl"/>
</dbReference>
<dbReference type="GO" id="GO:0031588">
    <property type="term" value="C:nucleotide-activated protein kinase complex"/>
    <property type="evidence" value="ECO:0000318"/>
    <property type="project" value="GO_Central"/>
</dbReference>
<dbReference type="GO" id="GO:0005634">
    <property type="term" value="C:nucleus"/>
    <property type="evidence" value="ECO:0000318"/>
    <property type="project" value="GO_Central"/>
</dbReference>
<dbReference type="GO" id="GO:0047322">
    <property type="term" value="F:[hydroxymethylglutaryl-CoA reductase (NADPH)] kinase activity"/>
    <property type="evidence" value="ECO:0007669"/>
    <property type="project" value="UniProtKB-EC"/>
</dbReference>
<dbReference type="GO" id="GO:0004679">
    <property type="term" value="F:AMP-activated protein kinase activity"/>
    <property type="evidence" value="ECO:0007669"/>
    <property type="project" value="Ensembl"/>
</dbReference>
<dbReference type="GO" id="GO:0005524">
    <property type="term" value="F:ATP binding"/>
    <property type="evidence" value="ECO:0007669"/>
    <property type="project" value="UniProtKB-KW"/>
</dbReference>
<dbReference type="GO" id="GO:0003682">
    <property type="term" value="F:chromatin binding"/>
    <property type="evidence" value="ECO:0007669"/>
    <property type="project" value="Ensembl"/>
</dbReference>
<dbReference type="GO" id="GO:0140823">
    <property type="term" value="F:histone H2BS36 kinase activity"/>
    <property type="evidence" value="ECO:0007669"/>
    <property type="project" value="Ensembl"/>
</dbReference>
<dbReference type="GO" id="GO:0046872">
    <property type="term" value="F:metal ion binding"/>
    <property type="evidence" value="ECO:0007669"/>
    <property type="project" value="UniProtKB-KW"/>
</dbReference>
<dbReference type="GO" id="GO:0106310">
    <property type="term" value="F:protein serine kinase activity"/>
    <property type="evidence" value="ECO:0007669"/>
    <property type="project" value="RHEA"/>
</dbReference>
<dbReference type="GO" id="GO:0004674">
    <property type="term" value="F:protein serine/threonine kinase activity"/>
    <property type="evidence" value="ECO:0000250"/>
    <property type="project" value="UniProtKB"/>
</dbReference>
<dbReference type="GO" id="GO:0004712">
    <property type="term" value="F:protein serine/threonine/tyrosine kinase activity"/>
    <property type="evidence" value="ECO:0007669"/>
    <property type="project" value="Ensembl"/>
</dbReference>
<dbReference type="GO" id="GO:0006914">
    <property type="term" value="P:autophagy"/>
    <property type="evidence" value="ECO:0007669"/>
    <property type="project" value="UniProtKB-KW"/>
</dbReference>
<dbReference type="GO" id="GO:0071277">
    <property type="term" value="P:cellular response to calcium ion"/>
    <property type="evidence" value="ECO:0007669"/>
    <property type="project" value="Ensembl"/>
</dbReference>
<dbReference type="GO" id="GO:0042149">
    <property type="term" value="P:cellular response to glucose starvation"/>
    <property type="evidence" value="ECO:0000250"/>
    <property type="project" value="UniProtKB"/>
</dbReference>
<dbReference type="GO" id="GO:0071333">
    <property type="term" value="P:cellular response to glucose stimulus"/>
    <property type="evidence" value="ECO:0007669"/>
    <property type="project" value="Ensembl"/>
</dbReference>
<dbReference type="GO" id="GO:0034599">
    <property type="term" value="P:cellular response to oxidative stress"/>
    <property type="evidence" value="ECO:0007669"/>
    <property type="project" value="Ensembl"/>
</dbReference>
<dbReference type="GO" id="GO:0071380">
    <property type="term" value="P:cellular response to prostaglandin E stimulus"/>
    <property type="evidence" value="ECO:0007669"/>
    <property type="project" value="Ensembl"/>
</dbReference>
<dbReference type="GO" id="GO:0071466">
    <property type="term" value="P:cellular response to xenobiotic stimulus"/>
    <property type="evidence" value="ECO:0007669"/>
    <property type="project" value="Ensembl"/>
</dbReference>
<dbReference type="GO" id="GO:0006695">
    <property type="term" value="P:cholesterol biosynthetic process"/>
    <property type="evidence" value="ECO:0007669"/>
    <property type="project" value="UniProtKB-KW"/>
</dbReference>
<dbReference type="GO" id="GO:0006633">
    <property type="term" value="P:fatty acid biosynthetic process"/>
    <property type="evidence" value="ECO:0007669"/>
    <property type="project" value="UniProtKB-KW"/>
</dbReference>
<dbReference type="GO" id="GO:0042593">
    <property type="term" value="P:glucose homeostasis"/>
    <property type="evidence" value="ECO:0000250"/>
    <property type="project" value="UniProtKB"/>
</dbReference>
<dbReference type="GO" id="GO:1905691">
    <property type="term" value="P:lipid droplet disassembly"/>
    <property type="evidence" value="ECO:0000250"/>
    <property type="project" value="UniProtKB"/>
</dbReference>
<dbReference type="GO" id="GO:0010629">
    <property type="term" value="P:negative regulation of gene expression"/>
    <property type="evidence" value="ECO:0007669"/>
    <property type="project" value="Ensembl"/>
</dbReference>
<dbReference type="GO" id="GO:1903944">
    <property type="term" value="P:negative regulation of hepatocyte apoptotic process"/>
    <property type="evidence" value="ECO:0007669"/>
    <property type="project" value="Ensembl"/>
</dbReference>
<dbReference type="GO" id="GO:1904262">
    <property type="term" value="P:negative regulation of TORC1 signaling"/>
    <property type="evidence" value="ECO:0000250"/>
    <property type="project" value="UniProtKB"/>
</dbReference>
<dbReference type="GO" id="GO:1904428">
    <property type="term" value="P:negative regulation of tubulin deacetylation"/>
    <property type="evidence" value="ECO:0007669"/>
    <property type="project" value="Ensembl"/>
</dbReference>
<dbReference type="GO" id="GO:0010508">
    <property type="term" value="P:positive regulation of autophagy"/>
    <property type="evidence" value="ECO:0000318"/>
    <property type="project" value="GO_Central"/>
</dbReference>
<dbReference type="GO" id="GO:1903829">
    <property type="term" value="P:positive regulation of protein localization"/>
    <property type="evidence" value="ECO:0007669"/>
    <property type="project" value="Ensembl"/>
</dbReference>
<dbReference type="GO" id="GO:1990044">
    <property type="term" value="P:protein localization to lipid droplet"/>
    <property type="evidence" value="ECO:0000250"/>
    <property type="project" value="UniProtKB"/>
</dbReference>
<dbReference type="GO" id="GO:0006468">
    <property type="term" value="P:protein phosphorylation"/>
    <property type="evidence" value="ECO:0000250"/>
    <property type="project" value="UniProtKB"/>
</dbReference>
<dbReference type="GO" id="GO:0042752">
    <property type="term" value="P:regulation of circadian rhythm"/>
    <property type="evidence" value="ECO:0007669"/>
    <property type="project" value="Ensembl"/>
</dbReference>
<dbReference type="GO" id="GO:0016241">
    <property type="term" value="P:regulation of macroautophagy"/>
    <property type="evidence" value="ECO:0000250"/>
    <property type="project" value="UniProtKB"/>
</dbReference>
<dbReference type="GO" id="GO:0070507">
    <property type="term" value="P:regulation of microtubule cytoskeleton organization"/>
    <property type="evidence" value="ECO:0007669"/>
    <property type="project" value="Ensembl"/>
</dbReference>
<dbReference type="GO" id="GO:0062028">
    <property type="term" value="P:regulation of stress granule assembly"/>
    <property type="evidence" value="ECO:0007669"/>
    <property type="project" value="Ensembl"/>
</dbReference>
<dbReference type="GO" id="GO:0014850">
    <property type="term" value="P:response to muscle activity"/>
    <property type="evidence" value="ECO:0007669"/>
    <property type="project" value="Ensembl"/>
</dbReference>
<dbReference type="GO" id="GO:0048511">
    <property type="term" value="P:rhythmic process"/>
    <property type="evidence" value="ECO:0007669"/>
    <property type="project" value="UniProtKB-KW"/>
</dbReference>
<dbReference type="GO" id="GO:0016055">
    <property type="term" value="P:Wnt signaling pathway"/>
    <property type="evidence" value="ECO:0007669"/>
    <property type="project" value="UniProtKB-KW"/>
</dbReference>
<dbReference type="CDD" id="cd12200">
    <property type="entry name" value="AMPKA2_C"/>
    <property type="match status" value="1"/>
</dbReference>
<dbReference type="CDD" id="cd14079">
    <property type="entry name" value="STKc_AMPK_alpha"/>
    <property type="match status" value="1"/>
</dbReference>
<dbReference type="CDD" id="cd14404">
    <property type="entry name" value="UBA_AID_AAPK2"/>
    <property type="match status" value="1"/>
</dbReference>
<dbReference type="FunFam" id="1.10.510.10:FF:000079">
    <property type="entry name" value="Non-specific serine/threonine protein kinase"/>
    <property type="match status" value="1"/>
</dbReference>
<dbReference type="FunFam" id="1.10.8.10:FF:000014">
    <property type="entry name" value="Non-specific serine/threonine protein kinase"/>
    <property type="match status" value="1"/>
</dbReference>
<dbReference type="FunFam" id="3.30.200.20:FF:000136">
    <property type="entry name" value="Non-specific serine/threonine protein kinase"/>
    <property type="match status" value="1"/>
</dbReference>
<dbReference type="FunFam" id="3.30.310.80:FF:000003">
    <property type="entry name" value="Non-specific serine/threonine protein kinase"/>
    <property type="match status" value="1"/>
</dbReference>
<dbReference type="Gene3D" id="1.10.8.10">
    <property type="entry name" value="DNA helicase RuvA subunit, C-terminal domain"/>
    <property type="match status" value="1"/>
</dbReference>
<dbReference type="Gene3D" id="3.30.310.80">
    <property type="entry name" value="Kinase associated domain 1, KA1"/>
    <property type="match status" value="1"/>
</dbReference>
<dbReference type="Gene3D" id="3.30.200.20">
    <property type="entry name" value="Phosphorylase Kinase, domain 1"/>
    <property type="match status" value="1"/>
</dbReference>
<dbReference type="Gene3D" id="1.10.510.10">
    <property type="entry name" value="Transferase(Phosphotransferase) domain 1"/>
    <property type="match status" value="1"/>
</dbReference>
<dbReference type="InterPro" id="IPR032270">
    <property type="entry name" value="AMPK_C"/>
</dbReference>
<dbReference type="InterPro" id="IPR039148">
    <property type="entry name" value="AMPKA2_C"/>
</dbReference>
<dbReference type="InterPro" id="IPR028375">
    <property type="entry name" value="KA1/Ssp2_C"/>
</dbReference>
<dbReference type="InterPro" id="IPR011009">
    <property type="entry name" value="Kinase-like_dom_sf"/>
</dbReference>
<dbReference type="InterPro" id="IPR049020">
    <property type="entry name" value="PRKAA1/2_AID"/>
</dbReference>
<dbReference type="InterPro" id="IPR028783">
    <property type="entry name" value="PRKAA2"/>
</dbReference>
<dbReference type="InterPro" id="IPR000719">
    <property type="entry name" value="Prot_kinase_dom"/>
</dbReference>
<dbReference type="InterPro" id="IPR017441">
    <property type="entry name" value="Protein_kinase_ATP_BS"/>
</dbReference>
<dbReference type="InterPro" id="IPR008271">
    <property type="entry name" value="Ser/Thr_kinase_AS"/>
</dbReference>
<dbReference type="PANTHER" id="PTHR24346:SF104">
    <property type="entry name" value="5'-AMP-ACTIVATED PROTEIN KINASE CATALYTIC SUBUNIT ALPHA-2"/>
    <property type="match status" value="1"/>
</dbReference>
<dbReference type="PANTHER" id="PTHR24346">
    <property type="entry name" value="MAP/MICROTUBULE AFFINITY-REGULATING KINASE"/>
    <property type="match status" value="1"/>
</dbReference>
<dbReference type="Pfam" id="PF16579">
    <property type="entry name" value="AdenylateSensor"/>
    <property type="match status" value="1"/>
</dbReference>
<dbReference type="Pfam" id="PF21147">
    <property type="entry name" value="AMPK_alpha_AID"/>
    <property type="match status" value="1"/>
</dbReference>
<dbReference type="Pfam" id="PF00069">
    <property type="entry name" value="Pkinase"/>
    <property type="match status" value="1"/>
</dbReference>
<dbReference type="SMART" id="SM00220">
    <property type="entry name" value="S_TKc"/>
    <property type="match status" value="1"/>
</dbReference>
<dbReference type="SUPFAM" id="SSF103243">
    <property type="entry name" value="KA1-like"/>
    <property type="match status" value="1"/>
</dbReference>
<dbReference type="SUPFAM" id="SSF56112">
    <property type="entry name" value="Protein kinase-like (PK-like)"/>
    <property type="match status" value="1"/>
</dbReference>
<dbReference type="PROSITE" id="PS00107">
    <property type="entry name" value="PROTEIN_KINASE_ATP"/>
    <property type="match status" value="1"/>
</dbReference>
<dbReference type="PROSITE" id="PS50011">
    <property type="entry name" value="PROTEIN_KINASE_DOM"/>
    <property type="match status" value="1"/>
</dbReference>
<dbReference type="PROSITE" id="PS00108">
    <property type="entry name" value="PROTEIN_KINASE_ST"/>
    <property type="match status" value="1"/>
</dbReference>
<sequence length="552" mass="62325">MAEKQKHDGRVKIGHYVLGDTLGVGTFGKVKIGEHQLTGHKVAVKILNRQKIRSLDVVGKIKREIQNLKLFRHPHIIKLYQVISTPTDFFMVMEYVSGGELFDYICKHGRVEEMEARRLFQQILSAVDYCHRHMVVHRDLKPENVLLDAQMNAKIADFGLSNMMSDGEFLRTSCGSPNYAAPEVISGRLYAGPEVDIWSCGVILYALLCGTLPFDDEHVPTLFKKIRGGVFYIPEYLNRSVATLLMHMLQVDPLKRATIKDIREHEWFKQDLPSYLFPEDPSYDANVIDDEAVKEVCEKFECTESEVMNSLYSGDPQDQLAVAYHLVIDNRRIMNQASEFYLASSPPTGSFMDDSAMHIPPGLKPHPERMPPLIADSPKARCPLDALNTTKPKSLAVKKAKWHLGIRSQSKPYDIMAEVYRAMKQLDFEWKVVNAYHLRVRRKNPVTGNYVKMSLQLYLVDNRSYLLDFKSIDDEVLEQRSGSSTPQRSCSAAGLHRPRSSLDSVTAESHSLSGSLSGSLTGSMLPSVPPRLGSHTMDFFEMCASLITTLAR</sequence>
<name>AAPK2_PIG</name>
<reference key="1">
    <citation type="submission" date="2002-10" db="EMBL/GenBank/DDBJ databases">
        <title>Molecular cloning and characterization of the porcine AMP-activated protein kinase alpha 2 (AMPKa2) gene.</title>
        <authorList>
            <person name="Kim T.-H."/>
            <person name="Choi B.-H."/>
            <person name="Park E.-W."/>
            <person name="Jeon J.-T."/>
            <person name="Park H.-S."/>
            <person name="Cheong I.-C."/>
        </authorList>
    </citation>
    <scope>NUCLEOTIDE SEQUENCE [MRNA]</scope>
</reference>
<reference key="2">
    <citation type="journal article" date="1995" name="Biochim. Biophys. Acta">
        <title>Catalytic subunits of the porcine and rat 5'-AMP-activated protein kinase are members of the SNF1 protein kinase family.</title>
        <authorList>
            <person name="Gao G."/>
            <person name="Widmer J."/>
            <person name="Stapleton D."/>
            <person name="Teh T."/>
            <person name="Cox T."/>
            <person name="Kemp B.E."/>
            <person name="Witters L.A."/>
        </authorList>
    </citation>
    <scope>NUCLEOTIDE SEQUENCE [MRNA] OF 16-144</scope>
    <source>
        <tissue>Liver</tissue>
    </source>
</reference>
<protein>
    <recommendedName>
        <fullName>5'-AMP-activated protein kinase catalytic subunit alpha-2</fullName>
        <shortName>AMPK subunit alpha-2</shortName>
        <ecNumber evidence="2">2.7.11.1</ecNumber>
    </recommendedName>
    <alternativeName>
        <fullName>Acetyl-CoA carboxylase kinase</fullName>
        <shortName>ACACA kinase</shortName>
    </alternativeName>
    <alternativeName>
        <fullName>Hydroxymethylglutaryl-CoA reductase kinase</fullName>
        <shortName>HMGCR kinase</shortName>
        <ecNumber evidence="2">2.7.11.31</ecNumber>
    </alternativeName>
</protein>
<accession>Q28948</accession>
<accession>Q7YRX9</accession>
<evidence type="ECO:0000250" key="1">
    <source>
        <dbReference type="UniProtKB" id="P54646"/>
    </source>
</evidence>
<evidence type="ECO:0000250" key="2">
    <source>
        <dbReference type="UniProtKB" id="Q09137"/>
    </source>
</evidence>
<evidence type="ECO:0000250" key="3">
    <source>
        <dbReference type="UniProtKB" id="Q13131"/>
    </source>
</evidence>
<evidence type="ECO:0000250" key="4">
    <source>
        <dbReference type="UniProtKB" id="Q8BRK8"/>
    </source>
</evidence>
<evidence type="ECO:0000255" key="5">
    <source>
        <dbReference type="PROSITE-ProRule" id="PRU00159"/>
    </source>
</evidence>
<evidence type="ECO:0000255" key="6">
    <source>
        <dbReference type="PROSITE-ProRule" id="PRU10027"/>
    </source>
</evidence>
<evidence type="ECO:0000256" key="7">
    <source>
        <dbReference type="SAM" id="MobiDB-lite"/>
    </source>
</evidence>
<evidence type="ECO:0000305" key="8"/>
<comment type="function">
    <text evidence="1 2 4">Catalytic subunit of AMP-activated protein kinase (AMPK), an energy sensor protein kinase that plays a key role in regulating cellular energy metabolism. In response to reduction of intracellular ATP levels, AMPK activates energy-producing pathways and inhibits energy-consuming processes: inhibits protein, carbohydrate and lipid biosynthesis, as well as cell growth and proliferation. AMPK acts via direct phosphorylation of metabolic enzymes, and by longer-term effects via phosphorylation of transcription regulators. Regulates lipid synthesis by phosphorylating and inactivating lipid metabolic enzymes such as ACACA, ACACB, GYS1, HMGCR and LIPE; regulates fatty acid and cholesterol synthesis by phosphorylating acetyl-CoA carboxylase (ACACA and ACACB) and hormone-sensitive lipase (LIPE) enzymes, respectively (By similarity). Promotes lipolysis of lipid droplets by mediating phosphorylation of isoform 1 of CHKA (CHKalpha2) (By similarity). Regulates insulin-signaling and glycolysis by phosphorylating IRS1, PFKFB2 and PFKFB3 (By similarity). Involved in insulin receptor/INSR internalization (By similarity). AMPK stimulates glucose uptake in muscle by increasing the translocation of the glucose transporter SLC2A4/GLUT4 to the plasma membrane, possibly by mediating phosphorylation of TBC1D4/AS160 (By similarity). Regulates transcription and chromatin structure by phosphorylating transcription regulators involved in energy metabolism such as CRTC2/TORC2, FOXO3, histone H2B, HDAC5, MEF2C, MLXIPL/ChREBP, EP300, HNF4A, p53/TP53, SREBF1, SREBF2 and PPARGC1A (By similarity). Acts as a key regulator of glucose homeostasis in liver by phosphorylating CRTC2/TORC2, leading to CRTC2/TORC2 sequestration in the cytoplasm. In response to stress, phosphorylates 'Ser-36' of histone H2B (H2BS36ph), leading to promote transcription (By similarity). Acts as a key regulator of cell growth and proliferation by phosphorylating FNIP1, TSC2, RPTOR, WDR24 and ATG1/ULK1: in response to nutrient limitation, negatively regulates the mTORC1 complex by phosphorylating RPTOR component of the mTORC1 complex and by phosphorylating and activating TSC2. Also phosphorylates and inhibits GATOR2 subunit WDR24 in response to nutrient limitation, leading to suppress glucose-mediated mTORC1 activation (By similarity). In response to energetic stress, phosphorylates FNIP1, inactivating the non-canonical mTORC1 signaling, thereby promoting nuclear translocation of TFEB and TFE3, and inducing transcription of lysosomal or autophagy genes (By similarity). In response to nutrient limitation, promotes autophagy by phosphorylating and activating ATG1/ULK1. In that process also activates WDR45/WIPI4. Phosphorylates CASP6, thereby preventing its autoprocessing and subsequent activation (By similarity). AMPK also acts as a regulator of circadian rhythm by mediating phosphorylation of CRY1, leading to destabilize it. May regulate the Wnt signaling pathway by phosphorylating CTNNB1, leading to stabilize it (By similarity). Also acts as a regulator of cellular polarity by remodeling the actin cytoskeleton; probably by indirectly activating myosin. Also phosphorylates CFTR, EEF2K, KLC1, NOS3 and SLC12A1 (By similarity). Plays an important role in the differential regulation of pro-autophagy (composed of PIK3C3, BECN1, PIK3R4 and UVRAG or ATG14) and non-autophagy (composed of PIK3C3, BECN1 and PIK3R4) complexes, in response to glucose starvation. Can inhibit the non-autophagy complex by phosphorylating PIK3C3 and can activate the pro-autophagy complex by phosphorylating BECN1 (By similarity). Upon glucose starvation, promotes ARF6 activation in a kinase-independent manner leading to cell migration (By similarity). Upon glucose deprivation mediates the phosphorylation of ACSS2 at 'Ser-659', which exposes the nuclear localization signal of ACSS2, required for its interaction with KPNA1 and nuclear translocation (By similarity). Upon stress, regulates mitochondrial fragmentation through phosphorylation of MTFR1L (By similarity).</text>
</comment>
<comment type="catalytic activity">
    <reaction evidence="2">
        <text>L-seryl-[protein] + ATP = O-phospho-L-seryl-[protein] + ADP + H(+)</text>
        <dbReference type="Rhea" id="RHEA:17989"/>
        <dbReference type="Rhea" id="RHEA-COMP:9863"/>
        <dbReference type="Rhea" id="RHEA-COMP:11604"/>
        <dbReference type="ChEBI" id="CHEBI:15378"/>
        <dbReference type="ChEBI" id="CHEBI:29999"/>
        <dbReference type="ChEBI" id="CHEBI:30616"/>
        <dbReference type="ChEBI" id="CHEBI:83421"/>
        <dbReference type="ChEBI" id="CHEBI:456216"/>
        <dbReference type="EC" id="2.7.11.1"/>
    </reaction>
</comment>
<comment type="catalytic activity">
    <reaction evidence="2">
        <text>L-threonyl-[protein] + ATP = O-phospho-L-threonyl-[protein] + ADP + H(+)</text>
        <dbReference type="Rhea" id="RHEA:46608"/>
        <dbReference type="Rhea" id="RHEA-COMP:11060"/>
        <dbReference type="Rhea" id="RHEA-COMP:11605"/>
        <dbReference type="ChEBI" id="CHEBI:15378"/>
        <dbReference type="ChEBI" id="CHEBI:30013"/>
        <dbReference type="ChEBI" id="CHEBI:30616"/>
        <dbReference type="ChEBI" id="CHEBI:61977"/>
        <dbReference type="ChEBI" id="CHEBI:456216"/>
        <dbReference type="EC" id="2.7.11.1"/>
    </reaction>
</comment>
<comment type="catalytic activity">
    <reaction evidence="2">
        <text>L-seryl-[acetyl-CoA carboxylase] + ATP = O-phospho-L-seryl-[acetyl-CoA carboxylase] + ADP + H(+)</text>
        <dbReference type="Rhea" id="RHEA:20333"/>
        <dbReference type="Rhea" id="RHEA-COMP:13722"/>
        <dbReference type="Rhea" id="RHEA-COMP:13723"/>
        <dbReference type="ChEBI" id="CHEBI:15378"/>
        <dbReference type="ChEBI" id="CHEBI:29999"/>
        <dbReference type="ChEBI" id="CHEBI:30616"/>
        <dbReference type="ChEBI" id="CHEBI:83421"/>
        <dbReference type="ChEBI" id="CHEBI:456216"/>
    </reaction>
</comment>
<comment type="catalytic activity">
    <reaction evidence="2">
        <text>L-seryl-[3-hydroxy-3-methylglutaryl-coenzyme A reductase] + ATP = O-phospho-L-seryl-[3-hydroxy-3-methylglutaryl-coenzyme A reductase] + ADP + H(+)</text>
        <dbReference type="Rhea" id="RHEA:23172"/>
        <dbReference type="Rhea" id="RHEA-COMP:13692"/>
        <dbReference type="Rhea" id="RHEA-COMP:13693"/>
        <dbReference type="ChEBI" id="CHEBI:15378"/>
        <dbReference type="ChEBI" id="CHEBI:29999"/>
        <dbReference type="ChEBI" id="CHEBI:30616"/>
        <dbReference type="ChEBI" id="CHEBI:83421"/>
        <dbReference type="ChEBI" id="CHEBI:456216"/>
        <dbReference type="EC" id="2.7.11.31"/>
    </reaction>
</comment>
<comment type="cofactor">
    <cofactor evidence="8">
        <name>Mg(2+)</name>
        <dbReference type="ChEBI" id="CHEBI:18420"/>
    </cofactor>
</comment>
<comment type="activity regulation">
    <text evidence="1">Activated by phosphorylation on Thr-172. Binding of AMP to non-catalytic gamma subunit (PRKAG1, PRKAG2 or PRKAG3) results in allosteric activation, inducing phosphorylation on Thr-172. AMP-binding to gamma subunit also sustains activity by preventing dephosphorylation of Thr-172. ADP also stimulates Thr-172 phosphorylation, without stimulating already phosphorylated AMPK. ATP promotes dephosphorylation of Thr-172, rendering the enzyme inactive. Under physiological conditions AMPK mainly exists in its inactive form in complex with ATP, which is much more abundant than AMP. Selectively inhibited by compound C (6-[4-(2-Piperidin-1-yl-ethoxy)-phenyl)]-3-pyridin-4-yl-pyyrazolo[1,5-a] pyrimidine. Activated by resveratrol, a natural polyphenol present in red wine, and S17834, a synthetic polyphenol. Salicylate/aspirin directly activates kinase activity, primarily by inhibiting Thr-172 dephosphorylation (By similarity).</text>
</comment>
<comment type="subunit">
    <text evidence="1 4">AMPK is a heterotrimer of an alpha catalytic subunit (PRKAA1 or PRKAA2), a beta (PRKAB1 or PRKAB2) and a gamma non-catalytic subunits (PRKAG1, PRKAG2 or PRKAG3). Interacts with FNIP1 and FNIP2 (By similarity). Interacts with DUSP29 (By similarity). Interacts with ARF6 (By similarity). The phosphorylated form at Thr-172 mediated by CamKK2 interacts with ACSS2 (By similarity).</text>
</comment>
<comment type="subcellular location">
    <subcellularLocation>
        <location evidence="4">Cytoplasm</location>
    </subcellularLocation>
    <subcellularLocation>
        <location evidence="1">Nucleus</location>
    </subcellularLocation>
    <text evidence="1">In response to stress, recruited by p53/TP53 to specific promoters.</text>
</comment>
<comment type="domain">
    <text evidence="3">The AIS (autoinhibitory sequence) region shows some sequence similarity with the ubiquitin-associated domains and represses kinase activity.</text>
</comment>
<comment type="PTM">
    <text evidence="4">Ubiquitinated.</text>
</comment>
<comment type="PTM">
    <text evidence="1">Phosphorylated at Thr-172 by STK11/LKB1 in complex with STE20-related adapter-alpha (STRADA) pseudo kinase and CAB39. Also phosphorylated at Thr-172 by CAMKK2; triggered by a rise in intracellular calcium ions, without detectable changes in the AMP/ATP ratio. CAMKK1 can also phosphorylate Thr-172, but at much lower level. Dephosphorylated by protein phosphatase 2A and 2C (PP2A and PP2C). Phosphorylated by ULK1; leading to negatively regulate AMPK activity and suggesting the existence of a regulatory feedback loop between ULK1 and AMPK (By similarity). Dephosphorylated by PPM1A and PPM1B at Thr-172 (mediated by STK11/LKB1) (By similarity).</text>
</comment>
<comment type="similarity">
    <text evidence="8">Belongs to the protein kinase superfamily. CAMK Ser/Thr protein kinase family. SNF1 subfamily.</text>
</comment>
<gene>
    <name type="primary">PRKAA2</name>
    <name type="synonym">AMPK2</name>
</gene>
<feature type="chain" id="PRO_0000085595" description="5'-AMP-activated protein kinase catalytic subunit alpha-2">
    <location>
        <begin position="1"/>
        <end position="552"/>
    </location>
</feature>
<feature type="domain" description="Protein kinase" evidence="5">
    <location>
        <begin position="16"/>
        <end position="268"/>
    </location>
</feature>
<feature type="region of interest" description="AIS" evidence="3">
    <location>
        <begin position="291"/>
        <end position="376"/>
    </location>
</feature>
<feature type="region of interest" description="Disordered" evidence="7">
    <location>
        <begin position="478"/>
        <end position="519"/>
    </location>
</feature>
<feature type="compositionally biased region" description="Polar residues" evidence="7">
    <location>
        <begin position="480"/>
        <end position="490"/>
    </location>
</feature>
<feature type="compositionally biased region" description="Low complexity" evidence="7">
    <location>
        <begin position="509"/>
        <end position="519"/>
    </location>
</feature>
<feature type="active site" description="Proton acceptor" evidence="5 6">
    <location>
        <position position="139"/>
    </location>
</feature>
<feature type="binding site" evidence="5">
    <location>
        <begin position="22"/>
        <end position="30"/>
    </location>
    <ligand>
        <name>ATP</name>
        <dbReference type="ChEBI" id="CHEBI:30616"/>
    </ligand>
</feature>
<feature type="binding site" evidence="5">
    <location>
        <position position="45"/>
    </location>
    <ligand>
        <name>ATP</name>
        <dbReference type="ChEBI" id="CHEBI:30616"/>
    </ligand>
</feature>
<feature type="modified residue" description="Phosphothreonine; by LKB1 and CaMKK2" evidence="1">
    <location>
        <position position="172"/>
    </location>
</feature>
<feature type="modified residue" description="Phosphothreonine" evidence="2">
    <location>
        <position position="258"/>
    </location>
</feature>
<feature type="modified residue" description="Phosphoserine" evidence="1">
    <location>
        <position position="377"/>
    </location>
</feature>
<feature type="modified residue" description="Phosphoserine" evidence="2">
    <location>
        <position position="491"/>
    </location>
</feature>
<feature type="sequence conflict" description="In Ref. 2; AAA85034." evidence="8" ref="2">
    <original>V</original>
    <variation>M</variation>
    <location>
        <position position="17"/>
    </location>
</feature>
<feature type="sequence conflict" description="In Ref. 2; AAA85034." evidence="8" ref="2">
    <original>V</original>
    <variation>E</variation>
    <location>
        <position position="30"/>
    </location>
</feature>
<feature type="sequence conflict" description="In Ref. 2; AAA85034." evidence="8" ref="2">
    <original>N</original>
    <variation>K</variation>
    <location>
        <position position="144"/>
    </location>
</feature>
<keyword id="KW-0067">ATP-binding</keyword>
<keyword id="KW-0072">Autophagy</keyword>
<keyword id="KW-0090">Biological rhythms</keyword>
<keyword id="KW-0152">Cholesterol biosynthesis</keyword>
<keyword id="KW-0153">Cholesterol metabolism</keyword>
<keyword id="KW-0156">Chromatin regulator</keyword>
<keyword id="KW-0963">Cytoplasm</keyword>
<keyword id="KW-0275">Fatty acid biosynthesis</keyword>
<keyword id="KW-0276">Fatty acid metabolism</keyword>
<keyword id="KW-0418">Kinase</keyword>
<keyword id="KW-0444">Lipid biosynthesis</keyword>
<keyword id="KW-0443">Lipid metabolism</keyword>
<keyword id="KW-0460">Magnesium</keyword>
<keyword id="KW-0479">Metal-binding</keyword>
<keyword id="KW-0547">Nucleotide-binding</keyword>
<keyword id="KW-0539">Nucleus</keyword>
<keyword id="KW-0597">Phosphoprotein</keyword>
<keyword id="KW-1185">Reference proteome</keyword>
<keyword id="KW-0723">Serine/threonine-protein kinase</keyword>
<keyword id="KW-0752">Steroid biosynthesis</keyword>
<keyword id="KW-0753">Steroid metabolism</keyword>
<keyword id="KW-0756">Sterol biosynthesis</keyword>
<keyword id="KW-1207">Sterol metabolism</keyword>
<keyword id="KW-0804">Transcription</keyword>
<keyword id="KW-0805">Transcription regulation</keyword>
<keyword id="KW-0808">Transferase</keyword>
<keyword id="KW-0832">Ubl conjugation</keyword>
<keyword id="KW-0879">Wnt signaling pathway</keyword>
<organism>
    <name type="scientific">Sus scrofa</name>
    <name type="common">Pig</name>
    <dbReference type="NCBI Taxonomy" id="9823"/>
    <lineage>
        <taxon>Eukaryota</taxon>
        <taxon>Metazoa</taxon>
        <taxon>Chordata</taxon>
        <taxon>Craniata</taxon>
        <taxon>Vertebrata</taxon>
        <taxon>Euteleostomi</taxon>
        <taxon>Mammalia</taxon>
        <taxon>Eutheria</taxon>
        <taxon>Laurasiatheria</taxon>
        <taxon>Artiodactyla</taxon>
        <taxon>Suina</taxon>
        <taxon>Suidae</taxon>
        <taxon>Sus</taxon>
    </lineage>
</organism>
<proteinExistence type="evidence at transcript level"/>